<comment type="function">
    <text>Has actin-binding and actin-bundling activity. Stabilizes actin filaments against disassembly.</text>
</comment>
<comment type="subunit">
    <text evidence="3 4 7">Binds to actin. Interacts with ABP1.</text>
</comment>
<comment type="interaction">
    <interactant intactId="EBI-33137">
        <id>Q08873</id>
    </interactant>
    <interactant intactId="EBI-2036">
        <id>P15891</id>
        <label>ABP1</label>
    </interactant>
    <organismsDiffer>false</organismsDiffer>
    <experiments>7</experiments>
</comment>
<comment type="subcellular location">
    <subcellularLocation>
        <location evidence="3 4 5">Cytoplasm</location>
        <location evidence="3 4 5">Cytoskeleton</location>
        <location evidence="3 4 5">Actin patch</location>
    </subcellularLocation>
    <text>Cortical actin patches.</text>
</comment>
<comment type="miscellaneous">
    <text evidence="6">Present with 1578 molecules/cell in log phase SD medium.</text>
</comment>
<proteinExistence type="evidence at protein level"/>
<gene>
    <name type="primary">SCP1</name>
    <name type="ordered locus">YOR367W</name>
</gene>
<protein>
    <recommendedName>
        <fullName>Transgelin</fullName>
    </recommendedName>
    <alternativeName>
        <fullName>Calponin homolog 1</fullName>
    </alternativeName>
</protein>
<name>SCP1_YEAST</name>
<reference key="1">
    <citation type="journal article" date="1997" name="Nature">
        <title>The nucleotide sequence of Saccharomyces cerevisiae chromosome XV.</title>
        <authorList>
            <person name="Dujon B."/>
            <person name="Albermann K."/>
            <person name="Aldea M."/>
            <person name="Alexandraki D."/>
            <person name="Ansorge W."/>
            <person name="Arino J."/>
            <person name="Benes V."/>
            <person name="Bohn C."/>
            <person name="Bolotin-Fukuhara M."/>
            <person name="Bordonne R."/>
            <person name="Boyer J."/>
            <person name="Camasses A."/>
            <person name="Casamayor A."/>
            <person name="Casas C."/>
            <person name="Cheret G."/>
            <person name="Cziepluch C."/>
            <person name="Daignan-Fornier B."/>
            <person name="Dang V.-D."/>
            <person name="de Haan M."/>
            <person name="Delius H."/>
            <person name="Durand P."/>
            <person name="Fairhead C."/>
            <person name="Feldmann H."/>
            <person name="Gaillon L."/>
            <person name="Galisson F."/>
            <person name="Gamo F.-J."/>
            <person name="Gancedo C."/>
            <person name="Goffeau A."/>
            <person name="Goulding S.E."/>
            <person name="Grivell L.A."/>
            <person name="Habbig B."/>
            <person name="Hand N.J."/>
            <person name="Hani J."/>
            <person name="Hattenhorst U."/>
            <person name="Hebling U."/>
            <person name="Hernando Y."/>
            <person name="Herrero E."/>
            <person name="Heumann K."/>
            <person name="Hiesel R."/>
            <person name="Hilger F."/>
            <person name="Hofmann B."/>
            <person name="Hollenberg C.P."/>
            <person name="Hughes B."/>
            <person name="Jauniaux J.-C."/>
            <person name="Kalogeropoulos A."/>
            <person name="Katsoulou C."/>
            <person name="Kordes E."/>
            <person name="Lafuente M.J."/>
            <person name="Landt O."/>
            <person name="Louis E.J."/>
            <person name="Maarse A.C."/>
            <person name="Madania A."/>
            <person name="Mannhaupt G."/>
            <person name="Marck C."/>
            <person name="Martin R.P."/>
            <person name="Mewes H.-W."/>
            <person name="Michaux G."/>
            <person name="Paces V."/>
            <person name="Parle-McDermott A.G."/>
            <person name="Pearson B.M."/>
            <person name="Perrin A."/>
            <person name="Pettersson B."/>
            <person name="Poch O."/>
            <person name="Pohl T.M."/>
            <person name="Poirey R."/>
            <person name="Portetelle D."/>
            <person name="Pujol A."/>
            <person name="Purnelle B."/>
            <person name="Ramezani Rad M."/>
            <person name="Rechmann S."/>
            <person name="Schwager C."/>
            <person name="Schweizer M."/>
            <person name="Sor F."/>
            <person name="Sterky F."/>
            <person name="Tarassov I.A."/>
            <person name="Teodoru C."/>
            <person name="Tettelin H."/>
            <person name="Thierry A."/>
            <person name="Tobiasch E."/>
            <person name="Tzermia M."/>
            <person name="Uhlen M."/>
            <person name="Unseld M."/>
            <person name="Valens M."/>
            <person name="Vandenbol M."/>
            <person name="Vetter I."/>
            <person name="Vlcek C."/>
            <person name="Voet M."/>
            <person name="Volckaert G."/>
            <person name="Voss H."/>
            <person name="Wambutt R."/>
            <person name="Wedler H."/>
            <person name="Wiemann S."/>
            <person name="Winsor B."/>
            <person name="Wolfe K.H."/>
            <person name="Zollner A."/>
            <person name="Zumstein E."/>
            <person name="Kleine K."/>
        </authorList>
    </citation>
    <scope>NUCLEOTIDE SEQUENCE [LARGE SCALE GENOMIC DNA]</scope>
    <source>
        <strain>ATCC 204508 / S288c</strain>
    </source>
</reference>
<reference key="2">
    <citation type="journal article" date="2014" name="G3 (Bethesda)">
        <title>The reference genome sequence of Saccharomyces cerevisiae: Then and now.</title>
        <authorList>
            <person name="Engel S.R."/>
            <person name="Dietrich F.S."/>
            <person name="Fisk D.G."/>
            <person name="Binkley G."/>
            <person name="Balakrishnan R."/>
            <person name="Costanzo M.C."/>
            <person name="Dwight S.S."/>
            <person name="Hitz B.C."/>
            <person name="Karra K."/>
            <person name="Nash R.S."/>
            <person name="Weng S."/>
            <person name="Wong E.D."/>
            <person name="Lloyd P."/>
            <person name="Skrzypek M.S."/>
            <person name="Miyasato S.R."/>
            <person name="Simison M."/>
            <person name="Cherry J.M."/>
        </authorList>
    </citation>
    <scope>GENOME REANNOTATION</scope>
    <source>
        <strain>ATCC 204508 / S288c</strain>
    </source>
</reference>
<reference key="3">
    <citation type="journal article" date="2003" name="Nature">
        <title>Global analysis of protein localization in budding yeast.</title>
        <authorList>
            <person name="Huh W.-K."/>
            <person name="Falvo J.V."/>
            <person name="Gerke L.C."/>
            <person name="Carroll A.S."/>
            <person name="Howson R.W."/>
            <person name="Weissman J.S."/>
            <person name="O'Shea E.K."/>
        </authorList>
    </citation>
    <scope>SUBCELLULAR LOCATION [LARGE SCALE ANALYSIS]</scope>
</reference>
<reference key="4">
    <citation type="journal article" date="2003" name="Biochem. J.">
        <title>SCP1 encodes an actin-bundling protein in yeast.</title>
        <authorList>
            <person name="Winder S.J."/>
            <person name="Jess T."/>
            <person name="Ayscough K.R."/>
        </authorList>
    </citation>
    <scope>INTERACTION WITH ACTIN</scope>
    <scope>SUBCELLULAR LOCATION</scope>
</reference>
<reference key="5">
    <citation type="journal article" date="2003" name="Mol. Biol. Cell">
        <title>The Saccharomyces cerevisiae calponin/transgelin homolog Scp1 functions with fimbrin to regulate stability and organization of the actin cytoskeleton.</title>
        <authorList>
            <person name="Goodman A."/>
            <person name="Goode B.L."/>
            <person name="Matsudaira P."/>
            <person name="Fink G.R."/>
        </authorList>
    </citation>
    <scope>INTERACTION WITH ACTIN</scope>
    <scope>SUBCELLULAR LOCATION</scope>
    <scope>MUTAGENESIS OF SER-185</scope>
</reference>
<reference key="6">
    <citation type="journal article" date="2003" name="Nature">
        <title>Global analysis of protein expression in yeast.</title>
        <authorList>
            <person name="Ghaemmaghami S."/>
            <person name="Huh W.-K."/>
            <person name="Bower K."/>
            <person name="Howson R.W."/>
            <person name="Belle A."/>
            <person name="Dephoure N."/>
            <person name="O'Shea E.K."/>
            <person name="Weissman J.S."/>
        </authorList>
    </citation>
    <scope>LEVEL OF PROTEIN EXPRESSION [LARGE SCALE ANALYSIS]</scope>
</reference>
<reference key="7">
    <citation type="journal article" date="2004" name="PLoS Biol.">
        <title>Protein interaction networks by proteome peptide scanning.</title>
        <authorList>
            <person name="Landgraf C."/>
            <person name="Panni S."/>
            <person name="Montecchi-Palazzi L."/>
            <person name="Castagnoli L."/>
            <person name="Schneider-Mergener J."/>
            <person name="Volkmer-Engert R."/>
            <person name="Cesareni G."/>
        </authorList>
    </citation>
    <scope>INTERACTION WITH ABP1</scope>
</reference>
<reference key="8">
    <citation type="journal article" date="2007" name="J. Proteome Res.">
        <title>Large-scale phosphorylation analysis of alpha-factor-arrested Saccharomyces cerevisiae.</title>
        <authorList>
            <person name="Li X."/>
            <person name="Gerber S.A."/>
            <person name="Rudner A.D."/>
            <person name="Beausoleil S.A."/>
            <person name="Haas W."/>
            <person name="Villen J."/>
            <person name="Elias J.E."/>
            <person name="Gygi S.P."/>
        </authorList>
    </citation>
    <scope>PHOSPHORYLATION [LARGE SCALE ANALYSIS] AT SER-11</scope>
    <scope>IDENTIFICATION BY MASS SPECTROMETRY [LARGE SCALE ANALYSIS]</scope>
    <source>
        <strain>ADR376</strain>
    </source>
</reference>
<reference key="9">
    <citation type="journal article" date="2008" name="Mol. Cell. Proteomics">
        <title>A multidimensional chromatography technology for in-depth phosphoproteome analysis.</title>
        <authorList>
            <person name="Albuquerque C.P."/>
            <person name="Smolka M.B."/>
            <person name="Payne S.H."/>
            <person name="Bafna V."/>
            <person name="Eng J."/>
            <person name="Zhou H."/>
        </authorList>
    </citation>
    <scope>IDENTIFICATION BY MASS SPECTROMETRY [LARGE SCALE ANALYSIS]</scope>
</reference>
<reference key="10">
    <citation type="journal article" date="2009" name="Science">
        <title>Global analysis of Cdk1 substrate phosphorylation sites provides insights into evolution.</title>
        <authorList>
            <person name="Holt L.J."/>
            <person name="Tuch B.B."/>
            <person name="Villen J."/>
            <person name="Johnson A.D."/>
            <person name="Gygi S.P."/>
            <person name="Morgan D.O."/>
        </authorList>
    </citation>
    <scope>PHOSPHORYLATION [LARGE SCALE ANALYSIS] AT SER-11</scope>
    <scope>IDENTIFICATION BY MASS SPECTROMETRY [LARGE SCALE ANALYSIS]</scope>
</reference>
<reference key="11">
    <citation type="journal article" date="2012" name="Proc. Natl. Acad. Sci. U.S.A.">
        <title>N-terminal acetylome analyses and functional insights of the N-terminal acetyltransferase NatB.</title>
        <authorList>
            <person name="Van Damme P."/>
            <person name="Lasa M."/>
            <person name="Polevoda B."/>
            <person name="Gazquez C."/>
            <person name="Elosegui-Artola A."/>
            <person name="Kim D.S."/>
            <person name="De Juan-Pardo E."/>
            <person name="Demeyer K."/>
            <person name="Hole K."/>
            <person name="Larrea E."/>
            <person name="Timmerman E."/>
            <person name="Prieto J."/>
            <person name="Arnesen T."/>
            <person name="Sherman F."/>
            <person name="Gevaert K."/>
            <person name="Aldabe R."/>
        </authorList>
    </citation>
    <scope>ACETYLATION [LARGE SCALE ANALYSIS] AT SER-2</scope>
    <scope>CLEAVAGE OF INITIATOR METHIONINE [LARGE SCALE ANALYSIS]</scope>
    <scope>IDENTIFICATION BY MASS SPECTROMETRY [LARGE SCALE ANALYSIS]</scope>
</reference>
<evidence type="ECO:0000255" key="1">
    <source>
        <dbReference type="PROSITE-ProRule" id="PRU00044"/>
    </source>
</evidence>
<evidence type="ECO:0000256" key="2">
    <source>
        <dbReference type="SAM" id="MobiDB-lite"/>
    </source>
</evidence>
<evidence type="ECO:0000269" key="3">
    <source>
    </source>
</evidence>
<evidence type="ECO:0000269" key="4">
    <source>
    </source>
</evidence>
<evidence type="ECO:0000269" key="5">
    <source>
    </source>
</evidence>
<evidence type="ECO:0000269" key="6">
    <source>
    </source>
</evidence>
<evidence type="ECO:0000269" key="7">
    <source>
    </source>
</evidence>
<evidence type="ECO:0007744" key="8">
    <source>
    </source>
</evidence>
<evidence type="ECO:0007744" key="9">
    <source>
    </source>
</evidence>
<evidence type="ECO:0007744" key="10">
    <source>
    </source>
</evidence>
<accession>Q08873</accession>
<accession>D6W360</accession>
<keyword id="KW-0007">Acetylation</keyword>
<keyword id="KW-0963">Cytoplasm</keyword>
<keyword id="KW-0206">Cytoskeleton</keyword>
<keyword id="KW-0597">Phosphoprotein</keyword>
<keyword id="KW-1185">Reference proteome</keyword>
<organism>
    <name type="scientific">Saccharomyces cerevisiae (strain ATCC 204508 / S288c)</name>
    <name type="common">Baker's yeast</name>
    <dbReference type="NCBI Taxonomy" id="559292"/>
    <lineage>
        <taxon>Eukaryota</taxon>
        <taxon>Fungi</taxon>
        <taxon>Dikarya</taxon>
        <taxon>Ascomycota</taxon>
        <taxon>Saccharomycotina</taxon>
        <taxon>Saccharomycetes</taxon>
        <taxon>Saccharomycetales</taxon>
        <taxon>Saccharomycetaceae</taxon>
        <taxon>Saccharomyces</taxon>
    </lineage>
</organism>
<dbReference type="EMBL" id="Z75275">
    <property type="protein sequence ID" value="CAA99698.1"/>
    <property type="molecule type" value="Genomic_DNA"/>
</dbReference>
<dbReference type="EMBL" id="BK006948">
    <property type="protein sequence ID" value="DAA11126.1"/>
    <property type="molecule type" value="Genomic_DNA"/>
</dbReference>
<dbReference type="PIR" id="S67279">
    <property type="entry name" value="S67279"/>
</dbReference>
<dbReference type="RefSeq" id="NP_015012.3">
    <property type="nucleotide sequence ID" value="NM_001183787.3"/>
</dbReference>
<dbReference type="BMRB" id="Q08873"/>
<dbReference type="SMR" id="Q08873"/>
<dbReference type="BioGRID" id="34750">
    <property type="interactions" value="37"/>
</dbReference>
<dbReference type="DIP" id="DIP-6340N"/>
<dbReference type="FunCoup" id="Q08873">
    <property type="interactions" value="1049"/>
</dbReference>
<dbReference type="IntAct" id="Q08873">
    <property type="interactions" value="2"/>
</dbReference>
<dbReference type="MINT" id="Q08873"/>
<dbReference type="STRING" id="4932.YOR367W"/>
<dbReference type="iPTMnet" id="Q08873"/>
<dbReference type="PaxDb" id="4932-YOR367W"/>
<dbReference type="PeptideAtlas" id="Q08873"/>
<dbReference type="EnsemblFungi" id="YOR367W_mRNA">
    <property type="protein sequence ID" value="YOR367W"/>
    <property type="gene ID" value="YOR367W"/>
</dbReference>
<dbReference type="GeneID" id="854549"/>
<dbReference type="KEGG" id="sce:YOR367W"/>
<dbReference type="AGR" id="SGD:S000005894"/>
<dbReference type="SGD" id="S000005894">
    <property type="gene designation" value="SCP1"/>
</dbReference>
<dbReference type="VEuPathDB" id="FungiDB:YOR367W"/>
<dbReference type="eggNOG" id="KOG2046">
    <property type="taxonomic scope" value="Eukaryota"/>
</dbReference>
<dbReference type="GeneTree" id="ENSGT00940000174742"/>
<dbReference type="HOGENOM" id="CLU_055232_2_1_1"/>
<dbReference type="InParanoid" id="Q08873"/>
<dbReference type="OMA" id="WIKTITG"/>
<dbReference type="OrthoDB" id="21595at2759"/>
<dbReference type="BioCyc" id="YEAST:G3O-33835-MONOMER"/>
<dbReference type="Reactome" id="R-SCE-114608">
    <property type="pathway name" value="Platelet degranulation"/>
</dbReference>
<dbReference type="Reactome" id="R-SCE-6798695">
    <property type="pathway name" value="Neutrophil degranulation"/>
</dbReference>
<dbReference type="BioGRID-ORCS" id="854549">
    <property type="hits" value="0 hits in 10 CRISPR screens"/>
</dbReference>
<dbReference type="PRO" id="PR:Q08873"/>
<dbReference type="Proteomes" id="UP000002311">
    <property type="component" value="Chromosome XV"/>
</dbReference>
<dbReference type="RNAct" id="Q08873">
    <property type="molecule type" value="protein"/>
</dbReference>
<dbReference type="GO" id="GO:0030479">
    <property type="term" value="C:actin cortical patch"/>
    <property type="evidence" value="ECO:0000314"/>
    <property type="project" value="SGD"/>
</dbReference>
<dbReference type="GO" id="GO:0015629">
    <property type="term" value="C:actin cytoskeleton"/>
    <property type="evidence" value="ECO:0000318"/>
    <property type="project" value="GO_Central"/>
</dbReference>
<dbReference type="GO" id="GO:0051015">
    <property type="term" value="F:actin filament binding"/>
    <property type="evidence" value="ECO:0000314"/>
    <property type="project" value="SGD"/>
</dbReference>
<dbReference type="GO" id="GO:0030674">
    <property type="term" value="F:protein-macromolecule adaptor activity"/>
    <property type="evidence" value="ECO:0000314"/>
    <property type="project" value="SGD"/>
</dbReference>
<dbReference type="GO" id="GO:0007015">
    <property type="term" value="P:actin filament organization"/>
    <property type="evidence" value="ECO:0000314"/>
    <property type="project" value="SGD"/>
</dbReference>
<dbReference type="CDD" id="cd21210">
    <property type="entry name" value="CH_SCP1-like"/>
    <property type="match status" value="1"/>
</dbReference>
<dbReference type="FunFam" id="1.10.418.10:FF:000106">
    <property type="entry name" value="Scp1p"/>
    <property type="match status" value="1"/>
</dbReference>
<dbReference type="Gene3D" id="1.10.418.10">
    <property type="entry name" value="Calponin-like domain"/>
    <property type="match status" value="1"/>
</dbReference>
<dbReference type="InterPro" id="IPR050606">
    <property type="entry name" value="Calponin-like"/>
</dbReference>
<dbReference type="InterPro" id="IPR001715">
    <property type="entry name" value="CH_dom"/>
</dbReference>
<dbReference type="InterPro" id="IPR036872">
    <property type="entry name" value="CH_dom_sf"/>
</dbReference>
<dbReference type="InterPro" id="IPR003096">
    <property type="entry name" value="SM22_calponin"/>
</dbReference>
<dbReference type="PANTHER" id="PTHR47385">
    <property type="entry name" value="CALPONIN"/>
    <property type="match status" value="1"/>
</dbReference>
<dbReference type="PANTHER" id="PTHR47385:SF14">
    <property type="entry name" value="TRANSGELIN"/>
    <property type="match status" value="1"/>
</dbReference>
<dbReference type="Pfam" id="PF00307">
    <property type="entry name" value="CH"/>
    <property type="match status" value="1"/>
</dbReference>
<dbReference type="PRINTS" id="PR00888">
    <property type="entry name" value="SM22CALPONIN"/>
</dbReference>
<dbReference type="SMART" id="SM00033">
    <property type="entry name" value="CH"/>
    <property type="match status" value="1"/>
</dbReference>
<dbReference type="SUPFAM" id="SSF47576">
    <property type="entry name" value="Calponin-homology domain, CH-domain"/>
    <property type="match status" value="1"/>
</dbReference>
<dbReference type="PROSITE" id="PS50021">
    <property type="entry name" value="CH"/>
    <property type="match status" value="1"/>
</dbReference>
<feature type="initiator methionine" description="Removed" evidence="10">
    <location>
        <position position="1"/>
    </location>
</feature>
<feature type="chain" id="PRO_0000204795" description="Transgelin">
    <location>
        <begin position="2"/>
        <end position="200"/>
    </location>
</feature>
<feature type="domain" description="Calponin-homology (CH)" evidence="1">
    <location>
        <begin position="26"/>
        <end position="136"/>
    </location>
</feature>
<feature type="region of interest" description="Disordered" evidence="2">
    <location>
        <begin position="144"/>
        <end position="168"/>
    </location>
</feature>
<feature type="region of interest" description="Interaction with SH3 domain of ABP1">
    <location>
        <begin position="151"/>
        <end position="164"/>
    </location>
</feature>
<feature type="compositionally biased region" description="Basic residues" evidence="2">
    <location>
        <begin position="154"/>
        <end position="165"/>
    </location>
</feature>
<feature type="modified residue" description="N-acetylserine" evidence="10">
    <location>
        <position position="2"/>
    </location>
</feature>
<feature type="modified residue" description="Phosphoserine" evidence="8 9">
    <location>
        <position position="11"/>
    </location>
</feature>
<feature type="mutagenesis site" description="Greatly reduces actin-binding and actin-bundling activity." evidence="3">
    <original>S</original>
    <variation>A</variation>
    <location>
        <position position="185"/>
    </location>
</feature>
<feature type="mutagenesis site" description="Moderately reduces actin-binding and actin-bundling activity." evidence="3">
    <original>S</original>
    <variation>D</variation>
    <location>
        <position position="185"/>
    </location>
</feature>
<sequence length="200" mass="22748">MSYDKKADVTSLDEDLRQLRESKFSPEAIQNIKIWVYKSVLKEIAPPGDLLECLKDGTVLCKLANILYEADTGEANHISWKSSKMPFVQMDQISQFLSFSRKYGVPEDELFQTIDLFEKKDPAIVFQTLKSLSRYANKKHTDRFPVLGPQLSTKKPRPPVKSKPKHLQDGTGWSTFEYGYMKGASQATEGVVLGQRRDIV</sequence>